<feature type="chain" id="PRO_0000208014" description="GTPase-activating protein GYP7">
    <location>
        <begin position="1"/>
        <end position="745"/>
    </location>
</feature>
<feature type="domain" description="Rab-GAP TBC" evidence="2">
    <location>
        <begin position="391"/>
        <end position="623"/>
    </location>
</feature>
<accession>Q6FWI1</accession>
<keyword id="KW-0343">GTPase activation</keyword>
<keyword id="KW-1185">Reference proteome</keyword>
<name>GYP7_CANGA</name>
<organism>
    <name type="scientific">Candida glabrata (strain ATCC 2001 / BCRC 20586 / JCM 3761 / NBRC 0622 / NRRL Y-65 / CBS 138)</name>
    <name type="common">Yeast</name>
    <name type="synonym">Nakaseomyces glabratus</name>
    <dbReference type="NCBI Taxonomy" id="284593"/>
    <lineage>
        <taxon>Eukaryota</taxon>
        <taxon>Fungi</taxon>
        <taxon>Dikarya</taxon>
        <taxon>Ascomycota</taxon>
        <taxon>Saccharomycotina</taxon>
        <taxon>Saccharomycetes</taxon>
        <taxon>Saccharomycetales</taxon>
        <taxon>Saccharomycetaceae</taxon>
        <taxon>Nakaseomyces</taxon>
    </lineage>
</organism>
<reference key="1">
    <citation type="journal article" date="2004" name="Nature">
        <title>Genome evolution in yeasts.</title>
        <authorList>
            <person name="Dujon B."/>
            <person name="Sherman D."/>
            <person name="Fischer G."/>
            <person name="Durrens P."/>
            <person name="Casaregola S."/>
            <person name="Lafontaine I."/>
            <person name="de Montigny J."/>
            <person name="Marck C."/>
            <person name="Neuveglise C."/>
            <person name="Talla E."/>
            <person name="Goffard N."/>
            <person name="Frangeul L."/>
            <person name="Aigle M."/>
            <person name="Anthouard V."/>
            <person name="Babour A."/>
            <person name="Barbe V."/>
            <person name="Barnay S."/>
            <person name="Blanchin S."/>
            <person name="Beckerich J.-M."/>
            <person name="Beyne E."/>
            <person name="Bleykasten C."/>
            <person name="Boisrame A."/>
            <person name="Boyer J."/>
            <person name="Cattolico L."/>
            <person name="Confanioleri F."/>
            <person name="de Daruvar A."/>
            <person name="Despons L."/>
            <person name="Fabre E."/>
            <person name="Fairhead C."/>
            <person name="Ferry-Dumazet H."/>
            <person name="Groppi A."/>
            <person name="Hantraye F."/>
            <person name="Hennequin C."/>
            <person name="Jauniaux N."/>
            <person name="Joyet P."/>
            <person name="Kachouri R."/>
            <person name="Kerrest A."/>
            <person name="Koszul R."/>
            <person name="Lemaire M."/>
            <person name="Lesur I."/>
            <person name="Ma L."/>
            <person name="Muller H."/>
            <person name="Nicaud J.-M."/>
            <person name="Nikolski M."/>
            <person name="Oztas S."/>
            <person name="Ozier-Kalogeropoulos O."/>
            <person name="Pellenz S."/>
            <person name="Potier S."/>
            <person name="Richard G.-F."/>
            <person name="Straub M.-L."/>
            <person name="Suleau A."/>
            <person name="Swennen D."/>
            <person name="Tekaia F."/>
            <person name="Wesolowski-Louvel M."/>
            <person name="Westhof E."/>
            <person name="Wirth B."/>
            <person name="Zeniou-Meyer M."/>
            <person name="Zivanovic Y."/>
            <person name="Bolotin-Fukuhara M."/>
            <person name="Thierry A."/>
            <person name="Bouchier C."/>
            <person name="Caudron B."/>
            <person name="Scarpelli C."/>
            <person name="Gaillardin C."/>
            <person name="Weissenbach J."/>
            <person name="Wincker P."/>
            <person name="Souciet J.-L."/>
        </authorList>
    </citation>
    <scope>NUCLEOTIDE SEQUENCE [LARGE SCALE GENOMIC DNA]</scope>
    <source>
        <strain>ATCC 2001 / BCRC 20586 / JCM 3761 / NBRC 0622 / NRRL Y-65 / CBS 138</strain>
    </source>
</reference>
<protein>
    <recommendedName>
        <fullName>GTPase-activating protein GYP7</fullName>
    </recommendedName>
    <alternativeName>
        <fullName>GAP for YPT7</fullName>
    </alternativeName>
</protein>
<evidence type="ECO:0000250" key="1"/>
<evidence type="ECO:0000255" key="2">
    <source>
        <dbReference type="PROSITE-ProRule" id="PRU00163"/>
    </source>
</evidence>
<sequence length="745" mass="87415">MSIELLFCKSQVYIHPTKNLQDNVSGYLLITHQSNSETITSSTISWIPENSLNEEDINFLNNAETRNINEKILRLPVSSRKLNTLLGSGSFLSSNWQFTIPVLSLYSVQFKLPNTWWYGSCILYSKSPRETESIPVLYFHDDLCPSTISKQKELNRSFDPFNNSNEMYWGGQDFKDALGSIVELKRVESEPTFWLVNATLEDLRNFSSANLKSSEEKPSSSKDDGVTKLKEDAWQKWESTKWSLMSQFADITAKTGSFVGSLIKKHPVVQLVERNKNNYYVQKMLKNPKVVEIQDDFDSAKIYLAKWALSVKEEAERYQEGSYDNPYRRILVSEFGLTGNEDVSFTEEELNRAMERNHPMTKQKWNSLFDSEGRLTVTVNEVKDYIFHGGLADDATRKEVWPFLLGVYPWDSSEDERKQLRKALHDEYMELKQKWVDREVNLDNDEEEYWKDQLFRIEKDVKRNDRNIDIYKYNTSDNLPFPEDTAPTTDDDDSIKNPNLKKLADILTTYNIFNPNLGYVQGMTDLLSPLYYIIRDEETTFWCFTNFMERMERNFLRDQSGIRDQMLALTDLCQLMLPRLSAHLQKCDSSDLFFCFRMLLVWFKREFNYDDIFNIWEVFFTDFYSSQYQLFFMLAILQKNSSPIVNNLQTFDQVIKYFNDLNSKMNWRDLMVRSELLFIQFHKTADLLARRQEQLIPENSGHDTSDIEGGTEPKTQSYISEHLQTLLSKEVIIQKENTRTKDSIK</sequence>
<proteinExistence type="inferred from homology"/>
<dbReference type="EMBL" id="CR380949">
    <property type="protein sequence ID" value="CAG58319.1"/>
    <property type="molecule type" value="Genomic_DNA"/>
</dbReference>
<dbReference type="RefSeq" id="XP_445413.1">
    <property type="nucleotide sequence ID" value="XM_445413.1"/>
</dbReference>
<dbReference type="SMR" id="Q6FWI1"/>
<dbReference type="FunCoup" id="Q6FWI1">
    <property type="interactions" value="86"/>
</dbReference>
<dbReference type="STRING" id="284593.Q6FWI1"/>
<dbReference type="EnsemblFungi" id="CAGL0C05489g-T">
    <property type="protein sequence ID" value="CAGL0C05489g-T-p1"/>
    <property type="gene ID" value="CAGL0C05489g"/>
</dbReference>
<dbReference type="KEGG" id="cgr:2886868"/>
<dbReference type="CGD" id="CAL0127226">
    <property type="gene designation" value="CAGL0C05489g"/>
</dbReference>
<dbReference type="VEuPathDB" id="FungiDB:CAGL0C05489g"/>
<dbReference type="eggNOG" id="KOG2197">
    <property type="taxonomic scope" value="Eukaryota"/>
</dbReference>
<dbReference type="HOGENOM" id="CLU_004457_0_1_1"/>
<dbReference type="InParanoid" id="Q6FWI1"/>
<dbReference type="OMA" id="WWREQRG"/>
<dbReference type="Proteomes" id="UP000002428">
    <property type="component" value="Chromosome C"/>
</dbReference>
<dbReference type="GO" id="GO:0005770">
    <property type="term" value="C:late endosome"/>
    <property type="evidence" value="ECO:0007669"/>
    <property type="project" value="EnsemblFungi"/>
</dbReference>
<dbReference type="GO" id="GO:0005096">
    <property type="term" value="F:GTPase activator activity"/>
    <property type="evidence" value="ECO:0007669"/>
    <property type="project" value="UniProtKB-KW"/>
</dbReference>
<dbReference type="GO" id="GO:0032889">
    <property type="term" value="P:regulation of vacuole fusion, non-autophagic"/>
    <property type="evidence" value="ECO:0007669"/>
    <property type="project" value="EnsemblFungi"/>
</dbReference>
<dbReference type="GO" id="GO:0016192">
    <property type="term" value="P:vesicle-mediated transport"/>
    <property type="evidence" value="ECO:0007669"/>
    <property type="project" value="EnsemblFungi"/>
</dbReference>
<dbReference type="Gene3D" id="1.10.8.270">
    <property type="entry name" value="putative rabgap domain of human tbc1 domain family member 14 like domains"/>
    <property type="match status" value="1"/>
</dbReference>
<dbReference type="Gene3D" id="1.10.472.80">
    <property type="entry name" value="Ypt/Rab-GAP domain of gyp1p, domain 3"/>
    <property type="match status" value="1"/>
</dbReference>
<dbReference type="InterPro" id="IPR000195">
    <property type="entry name" value="Rab-GAP-TBC_dom"/>
</dbReference>
<dbReference type="InterPro" id="IPR035969">
    <property type="entry name" value="Rab-GAP_TBC_sf"/>
</dbReference>
<dbReference type="PANTHER" id="PTHR22957:SF502">
    <property type="entry name" value="SMALL G PROTEIN SIGNALING MODULATOR 2-RELATED"/>
    <property type="match status" value="1"/>
</dbReference>
<dbReference type="PANTHER" id="PTHR22957">
    <property type="entry name" value="TBC1 DOMAIN FAMILY MEMBER GTPASE-ACTIVATING PROTEIN"/>
    <property type="match status" value="1"/>
</dbReference>
<dbReference type="Pfam" id="PF00566">
    <property type="entry name" value="RabGAP-TBC"/>
    <property type="match status" value="1"/>
</dbReference>
<dbReference type="SMART" id="SM00164">
    <property type="entry name" value="TBC"/>
    <property type="match status" value="1"/>
</dbReference>
<dbReference type="SUPFAM" id="SSF47923">
    <property type="entry name" value="Ypt/Rab-GAP domain of gyp1p"/>
    <property type="match status" value="2"/>
</dbReference>
<dbReference type="PROSITE" id="PS50086">
    <property type="entry name" value="TBC_RABGAP"/>
    <property type="match status" value="1"/>
</dbReference>
<gene>
    <name type="primary">GYP7</name>
    <name type="ordered locus">CAGL0C05489g</name>
</gene>
<comment type="function">
    <text evidence="1">Most effectively accelerate the intrinsic GTPase activity of YPT7. It is also active, but to a lesser extent, on YPT31, YPT32 and YPT1. YPT6 and SEC4 (By similarity).</text>
</comment>